<sequence>MLISQRPTLSEDVLTDNRSQFVIEPLEPGFGYTLGNSLRRTLLSSIPGAAVTSIRIDGVLHEFTTVPGVKEDVTEIILNLKSLVVSSEEDEPVTMYLRKQGPGEVTAGDIVPPAGVTVHNPGMHIATLNDKGKLEVELVVERGRGYVPAVQNRASGAEIGRIPVDSIYSPVLKVTYKVDATRVEQRTDFDKLILDVETKNSISPRDALASAGKTLVELFGLARELNVEAEGIEIGPSPAEADHIASFALPIDDLDLTVRSYNCLKREGVHTVGELVARTESDLLDIRNFGQKSIDEVKIKLHQLGLSLKDSPPSFDPSEVAGYDVATGTWSTEGAYDEQDYAETEQL</sequence>
<comment type="function">
    <text evidence="1">DNA-dependent RNA polymerase catalyzes the transcription of DNA into RNA using the four ribonucleoside triphosphates as substrates.</text>
</comment>
<comment type="catalytic activity">
    <reaction evidence="1">
        <text>RNA(n) + a ribonucleoside 5'-triphosphate = RNA(n+1) + diphosphate</text>
        <dbReference type="Rhea" id="RHEA:21248"/>
        <dbReference type="Rhea" id="RHEA-COMP:14527"/>
        <dbReference type="Rhea" id="RHEA-COMP:17342"/>
        <dbReference type="ChEBI" id="CHEBI:33019"/>
        <dbReference type="ChEBI" id="CHEBI:61557"/>
        <dbReference type="ChEBI" id="CHEBI:140395"/>
        <dbReference type="EC" id="2.7.7.6"/>
    </reaction>
</comment>
<comment type="subunit">
    <text evidence="1">Homodimer. The RNAP catalytic core consists of 2 alpha, 1 beta, 1 beta' and 1 omega subunit. When a sigma factor is associated with the core the holoenzyme is formed, which can initiate transcription.</text>
</comment>
<comment type="domain">
    <text evidence="1">The N-terminal domain is essential for RNAP assembly and basal transcription, whereas the C-terminal domain is involved in interaction with transcriptional regulators and with upstream promoter elements.</text>
</comment>
<comment type="similarity">
    <text evidence="1">Belongs to the RNA polymerase alpha chain family.</text>
</comment>
<feature type="chain" id="PRO_0000175334" description="DNA-directed RNA polymerase subunit alpha">
    <location>
        <begin position="1"/>
        <end position="347"/>
    </location>
</feature>
<feature type="region of interest" description="Alpha N-terminal domain (alpha-NTD)" evidence="1">
    <location>
        <begin position="1"/>
        <end position="226"/>
    </location>
</feature>
<feature type="region of interest" description="Alpha C-terminal domain (alpha-CTD)" evidence="1">
    <location>
        <begin position="243"/>
        <end position="347"/>
    </location>
</feature>
<keyword id="KW-0240">DNA-directed RNA polymerase</keyword>
<keyword id="KW-0548">Nucleotidyltransferase</keyword>
<keyword id="KW-1185">Reference proteome</keyword>
<keyword id="KW-0804">Transcription</keyword>
<keyword id="KW-0808">Transferase</keyword>
<reference key="1">
    <citation type="journal article" date="2003" name="Proc. Natl. Acad. Sci. U.S.A.">
        <title>The complete genome sequence of Mycobacterium bovis.</title>
        <authorList>
            <person name="Garnier T."/>
            <person name="Eiglmeier K."/>
            <person name="Camus J.-C."/>
            <person name="Medina N."/>
            <person name="Mansoor H."/>
            <person name="Pryor M."/>
            <person name="Duthoy S."/>
            <person name="Grondin S."/>
            <person name="Lacroix C."/>
            <person name="Monsempe C."/>
            <person name="Simon S."/>
            <person name="Harris B."/>
            <person name="Atkin R."/>
            <person name="Doggett J."/>
            <person name="Mayes R."/>
            <person name="Keating L."/>
            <person name="Wheeler P.R."/>
            <person name="Parkhill J."/>
            <person name="Barrell B.G."/>
            <person name="Cole S.T."/>
            <person name="Gordon S.V."/>
            <person name="Hewinson R.G."/>
        </authorList>
    </citation>
    <scope>NUCLEOTIDE SEQUENCE [LARGE SCALE GENOMIC DNA]</scope>
    <source>
        <strain>ATCC BAA-935 / AF2122/97</strain>
    </source>
</reference>
<reference key="2">
    <citation type="journal article" date="2017" name="Genome Announc.">
        <title>Updated reference genome sequence and annotation of Mycobacterium bovis AF2122/97.</title>
        <authorList>
            <person name="Malone K.M."/>
            <person name="Farrell D."/>
            <person name="Stuber T.P."/>
            <person name="Schubert O.T."/>
            <person name="Aebersold R."/>
            <person name="Robbe-Austerman S."/>
            <person name="Gordon S.V."/>
        </authorList>
    </citation>
    <scope>NUCLEOTIDE SEQUENCE [LARGE SCALE GENOMIC DNA]</scope>
    <scope>GENOME REANNOTATION</scope>
    <source>
        <strain>ATCC BAA-935 / AF2122/97</strain>
    </source>
</reference>
<dbReference type="EC" id="2.7.7.6" evidence="1"/>
<dbReference type="EMBL" id="LT708304">
    <property type="protein sequence ID" value="SIU02114.1"/>
    <property type="molecule type" value="Genomic_DNA"/>
</dbReference>
<dbReference type="RefSeq" id="NP_857126.1">
    <property type="nucleotide sequence ID" value="NC_002945.3"/>
</dbReference>
<dbReference type="RefSeq" id="WP_003418351.1">
    <property type="nucleotide sequence ID" value="NC_002945.4"/>
</dbReference>
<dbReference type="SMR" id="P66702"/>
<dbReference type="KEGG" id="mbo:BQ2027_MB3486C"/>
<dbReference type="PATRIC" id="fig|233413.5.peg.3823"/>
<dbReference type="Proteomes" id="UP000001419">
    <property type="component" value="Chromosome"/>
</dbReference>
<dbReference type="GO" id="GO:0005737">
    <property type="term" value="C:cytoplasm"/>
    <property type="evidence" value="ECO:0007669"/>
    <property type="project" value="UniProtKB-ARBA"/>
</dbReference>
<dbReference type="GO" id="GO:0000428">
    <property type="term" value="C:DNA-directed RNA polymerase complex"/>
    <property type="evidence" value="ECO:0007669"/>
    <property type="project" value="UniProtKB-KW"/>
</dbReference>
<dbReference type="GO" id="GO:0003677">
    <property type="term" value="F:DNA binding"/>
    <property type="evidence" value="ECO:0007669"/>
    <property type="project" value="UniProtKB-UniRule"/>
</dbReference>
<dbReference type="GO" id="GO:0003899">
    <property type="term" value="F:DNA-directed RNA polymerase activity"/>
    <property type="evidence" value="ECO:0007669"/>
    <property type="project" value="UniProtKB-UniRule"/>
</dbReference>
<dbReference type="GO" id="GO:0046983">
    <property type="term" value="F:protein dimerization activity"/>
    <property type="evidence" value="ECO:0007669"/>
    <property type="project" value="InterPro"/>
</dbReference>
<dbReference type="GO" id="GO:0006351">
    <property type="term" value="P:DNA-templated transcription"/>
    <property type="evidence" value="ECO:0007669"/>
    <property type="project" value="UniProtKB-UniRule"/>
</dbReference>
<dbReference type="CDD" id="cd06928">
    <property type="entry name" value="RNAP_alpha_NTD"/>
    <property type="match status" value="1"/>
</dbReference>
<dbReference type="FunFam" id="1.10.150.20:FF:000001">
    <property type="entry name" value="DNA-directed RNA polymerase subunit alpha"/>
    <property type="match status" value="1"/>
</dbReference>
<dbReference type="FunFam" id="2.170.120.12:FF:000001">
    <property type="entry name" value="DNA-directed RNA polymerase subunit alpha"/>
    <property type="match status" value="1"/>
</dbReference>
<dbReference type="Gene3D" id="1.10.150.20">
    <property type="entry name" value="5' to 3' exonuclease, C-terminal subdomain"/>
    <property type="match status" value="1"/>
</dbReference>
<dbReference type="Gene3D" id="2.170.120.12">
    <property type="entry name" value="DNA-directed RNA polymerase, insert domain"/>
    <property type="match status" value="1"/>
</dbReference>
<dbReference type="Gene3D" id="3.30.1360.10">
    <property type="entry name" value="RNA polymerase, RBP11-like subunit"/>
    <property type="match status" value="1"/>
</dbReference>
<dbReference type="HAMAP" id="MF_00059">
    <property type="entry name" value="RNApol_bact_RpoA"/>
    <property type="match status" value="1"/>
</dbReference>
<dbReference type="InterPro" id="IPR011262">
    <property type="entry name" value="DNA-dir_RNA_pol_insert"/>
</dbReference>
<dbReference type="InterPro" id="IPR011263">
    <property type="entry name" value="DNA-dir_RNA_pol_RpoA/D/Rpb3"/>
</dbReference>
<dbReference type="InterPro" id="IPR011773">
    <property type="entry name" value="DNA-dir_RpoA"/>
</dbReference>
<dbReference type="InterPro" id="IPR036603">
    <property type="entry name" value="RBP11-like"/>
</dbReference>
<dbReference type="InterPro" id="IPR011260">
    <property type="entry name" value="RNAP_asu_C"/>
</dbReference>
<dbReference type="InterPro" id="IPR036643">
    <property type="entry name" value="RNApol_insert_sf"/>
</dbReference>
<dbReference type="NCBIfam" id="NF003513">
    <property type="entry name" value="PRK05182.1-2"/>
    <property type="match status" value="1"/>
</dbReference>
<dbReference type="NCBIfam" id="NF003514">
    <property type="entry name" value="PRK05182.1-4"/>
    <property type="match status" value="1"/>
</dbReference>
<dbReference type="NCBIfam" id="NF003519">
    <property type="entry name" value="PRK05182.2-5"/>
    <property type="match status" value="1"/>
</dbReference>
<dbReference type="NCBIfam" id="TIGR02027">
    <property type="entry name" value="rpoA"/>
    <property type="match status" value="1"/>
</dbReference>
<dbReference type="Pfam" id="PF01000">
    <property type="entry name" value="RNA_pol_A_bac"/>
    <property type="match status" value="1"/>
</dbReference>
<dbReference type="Pfam" id="PF03118">
    <property type="entry name" value="RNA_pol_A_CTD"/>
    <property type="match status" value="1"/>
</dbReference>
<dbReference type="Pfam" id="PF01193">
    <property type="entry name" value="RNA_pol_L"/>
    <property type="match status" value="1"/>
</dbReference>
<dbReference type="SMART" id="SM00662">
    <property type="entry name" value="RPOLD"/>
    <property type="match status" value="1"/>
</dbReference>
<dbReference type="SUPFAM" id="SSF47789">
    <property type="entry name" value="C-terminal domain of RNA polymerase alpha subunit"/>
    <property type="match status" value="1"/>
</dbReference>
<dbReference type="SUPFAM" id="SSF56553">
    <property type="entry name" value="Insert subdomain of RNA polymerase alpha subunit"/>
    <property type="match status" value="1"/>
</dbReference>
<dbReference type="SUPFAM" id="SSF55257">
    <property type="entry name" value="RBP11-like subunits of RNA polymerase"/>
    <property type="match status" value="1"/>
</dbReference>
<name>RPOA_MYCBO</name>
<evidence type="ECO:0000255" key="1">
    <source>
        <dbReference type="HAMAP-Rule" id="MF_00059"/>
    </source>
</evidence>
<proteinExistence type="inferred from homology"/>
<accession>P66702</accession>
<accession>A0A1R3Y495</accession>
<accession>O06324</accession>
<accession>X2BND1</accession>
<protein>
    <recommendedName>
        <fullName evidence="1">DNA-directed RNA polymerase subunit alpha</fullName>
        <shortName evidence="1">RNAP subunit alpha</shortName>
        <ecNumber evidence="1">2.7.7.6</ecNumber>
    </recommendedName>
    <alternativeName>
        <fullName evidence="1">RNA polymerase subunit alpha</fullName>
    </alternativeName>
    <alternativeName>
        <fullName evidence="1">Transcriptase subunit alpha</fullName>
    </alternativeName>
</protein>
<organism>
    <name type="scientific">Mycobacterium bovis (strain ATCC BAA-935 / AF2122/97)</name>
    <dbReference type="NCBI Taxonomy" id="233413"/>
    <lineage>
        <taxon>Bacteria</taxon>
        <taxon>Bacillati</taxon>
        <taxon>Actinomycetota</taxon>
        <taxon>Actinomycetes</taxon>
        <taxon>Mycobacteriales</taxon>
        <taxon>Mycobacteriaceae</taxon>
        <taxon>Mycobacterium</taxon>
        <taxon>Mycobacterium tuberculosis complex</taxon>
    </lineage>
</organism>
<gene>
    <name evidence="1" type="primary">rpoA</name>
    <name type="ordered locus">BQ2027_MB3486C</name>
</gene>